<dbReference type="EMBL" id="M81255">
    <property type="protein sequence ID" value="AAA32345.1"/>
    <property type="molecule type" value="Genomic_DNA"/>
</dbReference>
<dbReference type="PDB" id="1TD0">
    <property type="method" value="X-ray"/>
    <property type="resolution" value="1.95 A"/>
    <property type="chains" value="A/B/C/D=2-115"/>
</dbReference>
<dbReference type="PDB" id="1TD3">
    <property type="method" value="X-ray"/>
    <property type="resolution" value="2.37 A"/>
    <property type="chains" value="A/B/C=1-115"/>
</dbReference>
<dbReference type="PDB" id="1TD4">
    <property type="method" value="X-ray"/>
    <property type="resolution" value="1.50 A"/>
    <property type="chains" value="A=1-115"/>
</dbReference>
<dbReference type="PDBsum" id="1TD0"/>
<dbReference type="PDBsum" id="1TD3"/>
<dbReference type="PDBsum" id="1TD4"/>
<dbReference type="SMR" id="P36275"/>
<dbReference type="DrugBank" id="DB03929">
    <property type="generic name" value="D-Serine"/>
</dbReference>
<dbReference type="EvolutionaryTrace" id="P36275"/>
<dbReference type="GO" id="GO:0098021">
    <property type="term" value="C:viral capsid, decoration"/>
    <property type="evidence" value="ECO:0007669"/>
    <property type="project" value="UniProtKB-KW"/>
</dbReference>
<dbReference type="Gene3D" id="2.40.300.10">
    <property type="entry name" value="Head decoration protein D"/>
    <property type="match status" value="1"/>
</dbReference>
<dbReference type="InterPro" id="IPR004195">
    <property type="entry name" value="Head_decoration_D"/>
</dbReference>
<dbReference type="InterPro" id="IPR036630">
    <property type="entry name" value="Head_decoration_D_sf"/>
</dbReference>
<dbReference type="Pfam" id="PF02924">
    <property type="entry name" value="HDPD"/>
    <property type="match status" value="1"/>
</dbReference>
<dbReference type="SUPFAM" id="SSF51274">
    <property type="entry name" value="Head decoration protein D (gpD, major capsid protein D)"/>
    <property type="match status" value="1"/>
</dbReference>
<protein>
    <recommendedName>
        <fullName>Head decoration protein</fullName>
    </recommendedName>
    <alternativeName>
        <fullName>Head protein GPshp</fullName>
    </alternativeName>
</protein>
<organismHost>
    <name type="scientific">Escherichia coli</name>
    <dbReference type="NCBI Taxonomy" id="562"/>
</organismHost>
<evidence type="ECO:0000305" key="1"/>
<evidence type="ECO:0007829" key="2">
    <source>
        <dbReference type="PDB" id="1TD4"/>
    </source>
</evidence>
<keyword id="KW-0002">3D-structure</keyword>
<keyword id="KW-1232">Capsid decoration protein</keyword>
<keyword id="KW-0167">Capsid protein</keyword>
<keyword id="KW-0426">Late protein</keyword>
<keyword id="KW-0946">Virion</keyword>
<accession>P36275</accession>
<comment type="function">
    <text>Stabilizes the head shell following the rearrangement of the gp7 subunits of the head shell lattice that accompanies expansion of the head.</text>
</comment>
<comment type="subcellular location">
    <subcellularLocation>
        <location evidence="1">Virion</location>
    </subcellularLocation>
</comment>
<comment type="similarity">
    <text evidence="1">Belongs to the lambda phage gpD family.</text>
</comment>
<reference key="1">
    <citation type="journal article" date="1993" name="Gene">
        <title>Sequence analysis of the phage 21 genes for prohead assembly and head completion.</title>
        <authorList>
            <person name="Smith M.P."/>
            <person name="Feiss M."/>
        </authorList>
    </citation>
    <scope>NUCLEOTIDE SEQUENCE [GENOMIC DNA]</scope>
</reference>
<organism>
    <name type="scientific">Enterobacteria phage P21</name>
    <name type="common">Bacteriophage 21</name>
    <name type="synonym">Bacteriophage P21</name>
    <dbReference type="NCBI Taxonomy" id="10711"/>
    <lineage>
        <taxon>Viruses</taxon>
        <taxon>Duplodnaviria</taxon>
        <taxon>Heunggongvirae</taxon>
        <taxon>Uroviricota</taxon>
        <taxon>Caudoviricetes</taxon>
        <taxon>Lambdavirus</taxon>
        <taxon>Lambdavirus lambda</taxon>
    </lineage>
</organism>
<name>DECO_BPP21</name>
<sequence length="115" mass="11977">MVTKTITEQRAEVRIFAGNDPAHTATGSSGISSPTPALTPLMLDEATGKLVVWDGQKAGSAVGILVLPLEGTETALTYYKSGTFATEAIHWPESVDEHKKANAFAGSALSHAALP</sequence>
<feature type="chain" id="PRO_0000077598" description="Head decoration protein">
    <location>
        <begin position="1"/>
        <end position="115"/>
    </location>
</feature>
<feature type="strand" evidence="2">
    <location>
        <begin position="16"/>
        <end position="18"/>
    </location>
</feature>
<feature type="strand" evidence="2">
    <location>
        <begin position="24"/>
        <end position="29"/>
    </location>
</feature>
<feature type="strand" evidence="2">
    <location>
        <begin position="40"/>
        <end position="43"/>
    </location>
</feature>
<feature type="turn" evidence="2">
    <location>
        <begin position="45"/>
        <end position="47"/>
    </location>
</feature>
<feature type="strand" evidence="2">
    <location>
        <begin position="50"/>
        <end position="52"/>
    </location>
</feature>
<feature type="strand" evidence="2">
    <location>
        <begin position="55"/>
        <end position="57"/>
    </location>
</feature>
<feature type="strand" evidence="2">
    <location>
        <begin position="63"/>
        <end position="67"/>
    </location>
</feature>
<feature type="strand" evidence="2">
    <location>
        <begin position="74"/>
        <end position="79"/>
    </location>
</feature>
<feature type="strand" evidence="2">
    <location>
        <begin position="81"/>
        <end position="85"/>
    </location>
</feature>
<feature type="helix" evidence="2">
    <location>
        <begin position="86"/>
        <end position="88"/>
    </location>
</feature>
<feature type="helix" evidence="2">
    <location>
        <begin position="97"/>
        <end position="101"/>
    </location>
</feature>
<feature type="turn" evidence="2">
    <location>
        <begin position="102"/>
        <end position="106"/>
    </location>
</feature>
<feature type="strand" evidence="2">
    <location>
        <begin position="107"/>
        <end position="112"/>
    </location>
</feature>
<proteinExistence type="evidence at protein level"/>
<gene>
    <name type="primary">shp</name>
</gene>